<reference key="1">
    <citation type="journal article" date="2009" name="Proc. Natl. Acad. Sci. U.S.A.">
        <title>Biogeography of the Sulfolobus islandicus pan-genome.</title>
        <authorList>
            <person name="Reno M.L."/>
            <person name="Held N.L."/>
            <person name="Fields C.J."/>
            <person name="Burke P.V."/>
            <person name="Whitaker R.J."/>
        </authorList>
    </citation>
    <scope>NUCLEOTIDE SEQUENCE [LARGE SCALE GENOMIC DNA]</scope>
    <source>
        <strain>M.16.27</strain>
    </source>
</reference>
<gene>
    <name type="ordered locus">M1627_2099</name>
</gene>
<name>Y2099_SACI3</name>
<protein>
    <recommendedName>
        <fullName evidence="1">Protein M1627_2099</fullName>
    </recommendedName>
</protein>
<accession>C3N026</accession>
<dbReference type="EMBL" id="CP001401">
    <property type="protein sequence ID" value="ACP55966.1"/>
    <property type="molecule type" value="Genomic_DNA"/>
</dbReference>
<dbReference type="RefSeq" id="WP_012719019.1">
    <property type="nucleotide sequence ID" value="NC_012632.1"/>
</dbReference>
<dbReference type="SMR" id="C3N026"/>
<dbReference type="KEGG" id="sim:M1627_2099"/>
<dbReference type="HOGENOM" id="CLU_030805_0_5_2"/>
<dbReference type="Proteomes" id="UP000002307">
    <property type="component" value="Chromosome"/>
</dbReference>
<dbReference type="CDD" id="cd00885">
    <property type="entry name" value="cinA"/>
    <property type="match status" value="1"/>
</dbReference>
<dbReference type="Gene3D" id="3.40.980.10">
    <property type="entry name" value="MoaB/Mog-like domain"/>
    <property type="match status" value="1"/>
</dbReference>
<dbReference type="HAMAP" id="MF_00226_A">
    <property type="entry name" value="CinA_A"/>
    <property type="match status" value="1"/>
</dbReference>
<dbReference type="InterPro" id="IPR050101">
    <property type="entry name" value="CinA"/>
</dbReference>
<dbReference type="InterPro" id="IPR023055">
    <property type="entry name" value="CinA_Arc"/>
</dbReference>
<dbReference type="InterPro" id="IPR036425">
    <property type="entry name" value="MoaB/Mog-like_dom_sf"/>
</dbReference>
<dbReference type="InterPro" id="IPR001453">
    <property type="entry name" value="MoaB/Mog_dom"/>
</dbReference>
<dbReference type="NCBIfam" id="NF002291">
    <property type="entry name" value="PRK01215.1"/>
    <property type="match status" value="1"/>
</dbReference>
<dbReference type="PANTHER" id="PTHR13939">
    <property type="entry name" value="NICOTINAMIDE-NUCLEOTIDE AMIDOHYDROLASE PNCC"/>
    <property type="match status" value="1"/>
</dbReference>
<dbReference type="PANTHER" id="PTHR13939:SF0">
    <property type="entry name" value="NMN AMIDOHYDROLASE-LIKE PROTEIN YFAY"/>
    <property type="match status" value="1"/>
</dbReference>
<dbReference type="Pfam" id="PF00994">
    <property type="entry name" value="MoCF_biosynth"/>
    <property type="match status" value="1"/>
</dbReference>
<dbReference type="SMART" id="SM00852">
    <property type="entry name" value="MoCF_biosynth"/>
    <property type="match status" value="1"/>
</dbReference>
<dbReference type="SUPFAM" id="SSF53218">
    <property type="entry name" value="Molybdenum cofactor biosynthesis proteins"/>
    <property type="match status" value="1"/>
</dbReference>
<evidence type="ECO:0000255" key="1">
    <source>
        <dbReference type="HAMAP-Rule" id="MF_00226"/>
    </source>
</evidence>
<proteinExistence type="inferred from homology"/>
<comment type="similarity">
    <text evidence="1">Belongs to the CinA family.</text>
</comment>
<sequence length="263" mass="29833">MDYWFAEIVTIGNEVLSGKTVNTNASHIGRRLTSLGFTVRRITVVMDDIDEIVSGFREAIDRKPKVIVSSGGLGPTWDDKTAEGLAKALGVNLELNKTAFDMILEKYTKRNIPLTEERKKMAYLPYGAMAVENNEGIAPGIYIYHNNIDILATPGVPREMENVLENFINKMLRNKPNLKYLEDFIYVENVMESALAPYVKELVKKYDIYIKTHPKSYELLRPILEIQIAGSGREEEIKVKIEKVKNELLDAIKKLNGIIRNSL</sequence>
<organism>
    <name type="scientific">Saccharolobus islandicus (strain M.16.27)</name>
    <name type="common">Sulfolobus islandicus</name>
    <dbReference type="NCBI Taxonomy" id="427318"/>
    <lineage>
        <taxon>Archaea</taxon>
        <taxon>Thermoproteota</taxon>
        <taxon>Thermoprotei</taxon>
        <taxon>Sulfolobales</taxon>
        <taxon>Sulfolobaceae</taxon>
        <taxon>Saccharolobus</taxon>
    </lineage>
</organism>
<feature type="chain" id="PRO_1000204331" description="Protein M1627_2099">
    <location>
        <begin position="1"/>
        <end position="263"/>
    </location>
</feature>